<reference key="1">
    <citation type="journal article" date="2004" name="Science">
        <title>The 1.2-megabase genome sequence of Mimivirus.</title>
        <authorList>
            <person name="Raoult D."/>
            <person name="Audic S."/>
            <person name="Robert C."/>
            <person name="Abergel C."/>
            <person name="Renesto P."/>
            <person name="Ogata H."/>
            <person name="La Scola B."/>
            <person name="Susan M."/>
            <person name="Claverie J.-M."/>
        </authorList>
    </citation>
    <scope>NUCLEOTIDE SEQUENCE [LARGE SCALE GENOMIC DNA]</scope>
    <source>
        <strain>Rowbotham-Bradford</strain>
    </source>
</reference>
<reference key="2">
    <citation type="journal article" date="2006" name="J. Virol.">
        <title>Mimivirus giant particles incorporate a large fraction of anonymous and unique gene products.</title>
        <authorList>
            <person name="Renesto P."/>
            <person name="Abergel C."/>
            <person name="Decloquement P."/>
            <person name="Moinier D."/>
            <person name="Azza S."/>
            <person name="Ogata H."/>
            <person name="Fourquet P."/>
            <person name="Gorvel J.-P."/>
            <person name="Claverie J.-M."/>
            <person name="Raoult D."/>
        </authorList>
    </citation>
    <scope>IDENTIFICATION BY MASS SPECTROMETRY [LARGE SCALE ANALYSIS]</scope>
    <scope>SUBCELLULAR LOCATION</scope>
</reference>
<gene>
    <name type="ordered locus">MIMI_R646</name>
</gene>
<evidence type="ECO:0000269" key="1">
    <source>
    </source>
</evidence>
<dbReference type="EMBL" id="AY653733">
    <property type="protein sequence ID" value="AAV50907.1"/>
    <property type="molecule type" value="Genomic_DNA"/>
</dbReference>
<dbReference type="KEGG" id="vg:9925290"/>
<dbReference type="Proteomes" id="UP000001134">
    <property type="component" value="Genome"/>
</dbReference>
<dbReference type="GO" id="GO:0044423">
    <property type="term" value="C:virion component"/>
    <property type="evidence" value="ECO:0007669"/>
    <property type="project" value="UniProtKB-KW"/>
</dbReference>
<protein>
    <recommendedName>
        <fullName>Uncharacterized protein R646</fullName>
    </recommendedName>
</protein>
<name>YR646_MIMIV</name>
<sequence>MTFRNRVGLTSAGGCCCPTLMTINQNVINNDINSPCGATSPYNFDAVVANRASVNPLGFGTRNISVISPASPTYTPTIDDYTGVYLRYNGNPITRPRNYLGNNFLNGGAENIADRTFNNNCNLASRFTNNDLRGYRAVDPNGRMRMYPPVFCDRPCDPCNPYSQSDIPYASELPYGATIPTQLDYPYGAGSIYSRGSQCNIAPVPSIYNYGPPTTFDPYNGNVQAIPIGPYGTTEPNICNPGAYRPDLFYPDRYRMDPNRLDNPRTYWNRLYC</sequence>
<proteinExistence type="evidence at protein level"/>
<accession>Q5UP43</accession>
<comment type="subcellular location">
    <subcellularLocation>
        <location evidence="1">Virion</location>
    </subcellularLocation>
</comment>
<organismHost>
    <name type="scientific">Acanthamoeba polyphaga</name>
    <name type="common">Amoeba</name>
    <dbReference type="NCBI Taxonomy" id="5757"/>
</organismHost>
<keyword id="KW-1185">Reference proteome</keyword>
<keyword id="KW-0946">Virion</keyword>
<feature type="chain" id="PRO_0000253430" description="Uncharacterized protein R646">
    <location>
        <begin position="1"/>
        <end position="273"/>
    </location>
</feature>
<organism>
    <name type="scientific">Acanthamoeba polyphaga mimivirus</name>
    <name type="common">APMV</name>
    <dbReference type="NCBI Taxonomy" id="212035"/>
    <lineage>
        <taxon>Viruses</taxon>
        <taxon>Varidnaviria</taxon>
        <taxon>Bamfordvirae</taxon>
        <taxon>Nucleocytoviricota</taxon>
        <taxon>Megaviricetes</taxon>
        <taxon>Imitervirales</taxon>
        <taxon>Mimiviridae</taxon>
        <taxon>Megamimivirinae</taxon>
        <taxon>Mimivirus</taxon>
        <taxon>Mimivirus bradfordmassiliense</taxon>
    </lineage>
</organism>